<accession>Q8PCY1</accession>
<evidence type="ECO:0000255" key="1">
    <source>
        <dbReference type="HAMAP-Rule" id="MF_00164"/>
    </source>
</evidence>
<protein>
    <recommendedName>
        <fullName evidence="1">Glutamine--fructose-6-phosphate aminotransferase [isomerizing]</fullName>
        <ecNumber evidence="1">2.6.1.16</ecNumber>
    </recommendedName>
    <alternativeName>
        <fullName evidence="1">D-fructose-6-phosphate amidotransferase</fullName>
    </alternativeName>
    <alternativeName>
        <fullName evidence="1">GFAT</fullName>
    </alternativeName>
    <alternativeName>
        <fullName evidence="1">Glucosamine-6-phosphate synthase</fullName>
    </alternativeName>
    <alternativeName>
        <fullName evidence="1">Hexosephosphate aminotransferase</fullName>
    </alternativeName>
    <alternativeName>
        <fullName evidence="1">L-glutamine--D-fructose-6-phosphate amidotransferase</fullName>
    </alternativeName>
</protein>
<dbReference type="EC" id="2.6.1.16" evidence="1"/>
<dbReference type="EMBL" id="AE008922">
    <property type="protein sequence ID" value="AAM39885.1"/>
    <property type="molecule type" value="Genomic_DNA"/>
</dbReference>
<dbReference type="RefSeq" id="NP_635961.1">
    <property type="nucleotide sequence ID" value="NC_003902.1"/>
</dbReference>
<dbReference type="RefSeq" id="WP_011035815.1">
    <property type="nucleotide sequence ID" value="NC_003902.1"/>
</dbReference>
<dbReference type="SMR" id="Q8PCY1"/>
<dbReference type="STRING" id="190485.XCC0569"/>
<dbReference type="EnsemblBacteria" id="AAM39885">
    <property type="protein sequence ID" value="AAM39885"/>
    <property type="gene ID" value="XCC0569"/>
</dbReference>
<dbReference type="KEGG" id="xcc:XCC0569"/>
<dbReference type="PATRIC" id="fig|190485.4.peg.626"/>
<dbReference type="eggNOG" id="COG0449">
    <property type="taxonomic scope" value="Bacteria"/>
</dbReference>
<dbReference type="HOGENOM" id="CLU_012520_5_2_6"/>
<dbReference type="OrthoDB" id="9761808at2"/>
<dbReference type="Proteomes" id="UP000001010">
    <property type="component" value="Chromosome"/>
</dbReference>
<dbReference type="GO" id="GO:0005829">
    <property type="term" value="C:cytosol"/>
    <property type="evidence" value="ECO:0000318"/>
    <property type="project" value="GO_Central"/>
</dbReference>
<dbReference type="GO" id="GO:0097367">
    <property type="term" value="F:carbohydrate derivative binding"/>
    <property type="evidence" value="ECO:0007669"/>
    <property type="project" value="InterPro"/>
</dbReference>
<dbReference type="GO" id="GO:0004360">
    <property type="term" value="F:glutamine-fructose-6-phosphate transaminase (isomerizing) activity"/>
    <property type="evidence" value="ECO:0000318"/>
    <property type="project" value="GO_Central"/>
</dbReference>
<dbReference type="GO" id="GO:0005975">
    <property type="term" value="P:carbohydrate metabolic process"/>
    <property type="evidence" value="ECO:0007669"/>
    <property type="project" value="UniProtKB-UniRule"/>
</dbReference>
<dbReference type="GO" id="GO:0006002">
    <property type="term" value="P:fructose 6-phosphate metabolic process"/>
    <property type="evidence" value="ECO:0000318"/>
    <property type="project" value="GO_Central"/>
</dbReference>
<dbReference type="GO" id="GO:0006487">
    <property type="term" value="P:protein N-linked glycosylation"/>
    <property type="evidence" value="ECO:0000318"/>
    <property type="project" value="GO_Central"/>
</dbReference>
<dbReference type="GO" id="GO:0006047">
    <property type="term" value="P:UDP-N-acetylglucosamine metabolic process"/>
    <property type="evidence" value="ECO:0000318"/>
    <property type="project" value="GO_Central"/>
</dbReference>
<dbReference type="CDD" id="cd00714">
    <property type="entry name" value="GFAT"/>
    <property type="match status" value="1"/>
</dbReference>
<dbReference type="CDD" id="cd05008">
    <property type="entry name" value="SIS_GlmS_GlmD_1"/>
    <property type="match status" value="1"/>
</dbReference>
<dbReference type="CDD" id="cd05009">
    <property type="entry name" value="SIS_GlmS_GlmD_2"/>
    <property type="match status" value="1"/>
</dbReference>
<dbReference type="FunFam" id="3.40.50.10490:FF:000001">
    <property type="entry name" value="Glutamine--fructose-6-phosphate aminotransferase [isomerizing]"/>
    <property type="match status" value="1"/>
</dbReference>
<dbReference type="FunFam" id="3.40.50.10490:FF:000002">
    <property type="entry name" value="Glutamine--fructose-6-phosphate aminotransferase [isomerizing]"/>
    <property type="match status" value="1"/>
</dbReference>
<dbReference type="FunFam" id="3.60.20.10:FF:000006">
    <property type="entry name" value="Glutamine--fructose-6-phosphate aminotransferase [isomerizing]"/>
    <property type="match status" value="1"/>
</dbReference>
<dbReference type="Gene3D" id="3.40.50.10490">
    <property type="entry name" value="Glucose-6-phosphate isomerase like protein, domain 1"/>
    <property type="match status" value="2"/>
</dbReference>
<dbReference type="Gene3D" id="3.60.20.10">
    <property type="entry name" value="Glutamine Phosphoribosylpyrophosphate, subunit 1, domain 1"/>
    <property type="match status" value="1"/>
</dbReference>
<dbReference type="HAMAP" id="MF_00164">
    <property type="entry name" value="GlmS"/>
    <property type="match status" value="1"/>
</dbReference>
<dbReference type="InterPro" id="IPR017932">
    <property type="entry name" value="GATase_2_dom"/>
</dbReference>
<dbReference type="InterPro" id="IPR005855">
    <property type="entry name" value="GFAT"/>
</dbReference>
<dbReference type="InterPro" id="IPR047084">
    <property type="entry name" value="GFAT_N"/>
</dbReference>
<dbReference type="InterPro" id="IPR035466">
    <property type="entry name" value="GlmS/AgaS_SIS"/>
</dbReference>
<dbReference type="InterPro" id="IPR035490">
    <property type="entry name" value="GlmS/FrlB_SIS"/>
</dbReference>
<dbReference type="InterPro" id="IPR029055">
    <property type="entry name" value="Ntn_hydrolases_N"/>
</dbReference>
<dbReference type="InterPro" id="IPR001347">
    <property type="entry name" value="SIS_dom"/>
</dbReference>
<dbReference type="InterPro" id="IPR046348">
    <property type="entry name" value="SIS_dom_sf"/>
</dbReference>
<dbReference type="NCBIfam" id="TIGR01135">
    <property type="entry name" value="glmS"/>
    <property type="match status" value="1"/>
</dbReference>
<dbReference type="NCBIfam" id="NF001484">
    <property type="entry name" value="PRK00331.1"/>
    <property type="match status" value="1"/>
</dbReference>
<dbReference type="PANTHER" id="PTHR10937">
    <property type="entry name" value="GLUCOSAMINE--FRUCTOSE-6-PHOSPHATE AMINOTRANSFERASE, ISOMERIZING"/>
    <property type="match status" value="1"/>
</dbReference>
<dbReference type="PANTHER" id="PTHR10937:SF0">
    <property type="entry name" value="GLUTAMINE--FRUCTOSE-6-PHOSPHATE TRANSAMINASE (ISOMERIZING)"/>
    <property type="match status" value="1"/>
</dbReference>
<dbReference type="Pfam" id="PF13522">
    <property type="entry name" value="GATase_6"/>
    <property type="match status" value="1"/>
</dbReference>
<dbReference type="Pfam" id="PF01380">
    <property type="entry name" value="SIS"/>
    <property type="match status" value="2"/>
</dbReference>
<dbReference type="SUPFAM" id="SSF56235">
    <property type="entry name" value="N-terminal nucleophile aminohydrolases (Ntn hydrolases)"/>
    <property type="match status" value="1"/>
</dbReference>
<dbReference type="SUPFAM" id="SSF53697">
    <property type="entry name" value="SIS domain"/>
    <property type="match status" value="1"/>
</dbReference>
<dbReference type="PROSITE" id="PS51278">
    <property type="entry name" value="GATASE_TYPE_2"/>
    <property type="match status" value="1"/>
</dbReference>
<dbReference type="PROSITE" id="PS51464">
    <property type="entry name" value="SIS"/>
    <property type="match status" value="2"/>
</dbReference>
<sequence>MCGIVGAIAGRDVVPVLIEGLKRLEYRGYDSSGIAVLDGTQVRRVRRTGRVAEMAQAAQAEQFGATLGIGHTRWATHGGVTEANAHPHISAGVALVHNGIIENHEEQREKLRALGYTFESQTDTEVIAHLIHHHLADAGDLLSALQRTVKELTGAYALAVMSQAEQERFVCARMGCPLLIGVGEGENFVASDVSAIVQATRQVIFLEEGDTAELRRDGVRVFDASDAAVERPLHLSDVSLASLELGPFRHFMQKEIHEQPRALADTIEAAIDAKGFPASLFGPTADAVLRDIEGVQILACGTSYYAGLTARYWIEAIAGLPCSVEIASEYRYRAAYANPKHLIVTISQSGETLDTMEALKYAKSLGHLHTLSICNVPESAIPRASELVCYTRAGAEIGVASTKAFTTQLAVLFQLTMVLGKLQGRISDSEEADYLEQLRFLPGSVQHALNLEPQIMAWAERFSPKENALFLGRGLHYPIALEGALKLKEISYIHAEAYPAGELKHGPLALVDATMPVVVIAPNDRLLEKVKSNMQEVRARGGELFVFADQDSHFSESDGVHVIRTPRHAGVLSPVIHTIPVQLLAYHTALARGTDVDKPRNLAKSVTVE</sequence>
<comment type="function">
    <text evidence="1">Catalyzes the first step in hexosamine metabolism, converting fructose-6P into glucosamine-6P using glutamine as a nitrogen source.</text>
</comment>
<comment type="catalytic activity">
    <reaction evidence="1">
        <text>D-fructose 6-phosphate + L-glutamine = D-glucosamine 6-phosphate + L-glutamate</text>
        <dbReference type="Rhea" id="RHEA:13237"/>
        <dbReference type="ChEBI" id="CHEBI:29985"/>
        <dbReference type="ChEBI" id="CHEBI:58359"/>
        <dbReference type="ChEBI" id="CHEBI:58725"/>
        <dbReference type="ChEBI" id="CHEBI:61527"/>
        <dbReference type="EC" id="2.6.1.16"/>
    </reaction>
</comment>
<comment type="subunit">
    <text evidence="1">Homodimer.</text>
</comment>
<comment type="subcellular location">
    <subcellularLocation>
        <location evidence="1">Cytoplasm</location>
    </subcellularLocation>
</comment>
<feature type="initiator methionine" description="Removed" evidence="1">
    <location>
        <position position="1"/>
    </location>
</feature>
<feature type="chain" id="PRO_0000135415" description="Glutamine--fructose-6-phosphate aminotransferase [isomerizing]">
    <location>
        <begin position="2"/>
        <end position="609"/>
    </location>
</feature>
<feature type="domain" description="Glutamine amidotransferase type-2" evidence="1">
    <location>
        <begin position="2"/>
        <end position="217"/>
    </location>
</feature>
<feature type="domain" description="SIS 1" evidence="1">
    <location>
        <begin position="284"/>
        <end position="425"/>
    </location>
</feature>
<feature type="domain" description="SIS 2" evidence="1">
    <location>
        <begin position="458"/>
        <end position="599"/>
    </location>
</feature>
<feature type="active site" description="Nucleophile; for GATase activity" evidence="1">
    <location>
        <position position="2"/>
    </location>
</feature>
<feature type="active site" description="For Fru-6P isomerization activity" evidence="1">
    <location>
        <position position="604"/>
    </location>
</feature>
<gene>
    <name evidence="1" type="primary">glmS</name>
    <name type="ordered locus">XCC0569</name>
</gene>
<name>GLMS_XANCP</name>
<proteinExistence type="inferred from homology"/>
<organism>
    <name type="scientific">Xanthomonas campestris pv. campestris (strain ATCC 33913 / DSM 3586 / NCPPB 528 / LMG 568 / P 25)</name>
    <dbReference type="NCBI Taxonomy" id="190485"/>
    <lineage>
        <taxon>Bacteria</taxon>
        <taxon>Pseudomonadati</taxon>
        <taxon>Pseudomonadota</taxon>
        <taxon>Gammaproteobacteria</taxon>
        <taxon>Lysobacterales</taxon>
        <taxon>Lysobacteraceae</taxon>
        <taxon>Xanthomonas</taxon>
    </lineage>
</organism>
<keyword id="KW-0032">Aminotransferase</keyword>
<keyword id="KW-0963">Cytoplasm</keyword>
<keyword id="KW-0315">Glutamine amidotransferase</keyword>
<keyword id="KW-1185">Reference proteome</keyword>
<keyword id="KW-0677">Repeat</keyword>
<keyword id="KW-0808">Transferase</keyword>
<reference key="1">
    <citation type="journal article" date="2002" name="Nature">
        <title>Comparison of the genomes of two Xanthomonas pathogens with differing host specificities.</title>
        <authorList>
            <person name="da Silva A.C.R."/>
            <person name="Ferro J.A."/>
            <person name="Reinach F.C."/>
            <person name="Farah C.S."/>
            <person name="Furlan L.R."/>
            <person name="Quaggio R.B."/>
            <person name="Monteiro-Vitorello C.B."/>
            <person name="Van Sluys M.A."/>
            <person name="Almeida N.F. Jr."/>
            <person name="Alves L.M.C."/>
            <person name="do Amaral A.M."/>
            <person name="Bertolini M.C."/>
            <person name="Camargo L.E.A."/>
            <person name="Camarotte G."/>
            <person name="Cannavan F."/>
            <person name="Cardozo J."/>
            <person name="Chambergo F."/>
            <person name="Ciapina L.P."/>
            <person name="Cicarelli R.M.B."/>
            <person name="Coutinho L.L."/>
            <person name="Cursino-Santos J.R."/>
            <person name="El-Dorry H."/>
            <person name="Faria J.B."/>
            <person name="Ferreira A.J.S."/>
            <person name="Ferreira R.C.C."/>
            <person name="Ferro M.I.T."/>
            <person name="Formighieri E.F."/>
            <person name="Franco M.C."/>
            <person name="Greggio C.C."/>
            <person name="Gruber A."/>
            <person name="Katsuyama A.M."/>
            <person name="Kishi L.T."/>
            <person name="Leite R.P."/>
            <person name="Lemos E.G.M."/>
            <person name="Lemos M.V.F."/>
            <person name="Locali E.C."/>
            <person name="Machado M.A."/>
            <person name="Madeira A.M.B.N."/>
            <person name="Martinez-Rossi N.M."/>
            <person name="Martins E.C."/>
            <person name="Meidanis J."/>
            <person name="Menck C.F.M."/>
            <person name="Miyaki C.Y."/>
            <person name="Moon D.H."/>
            <person name="Moreira L.M."/>
            <person name="Novo M.T.M."/>
            <person name="Okura V.K."/>
            <person name="Oliveira M.C."/>
            <person name="Oliveira V.R."/>
            <person name="Pereira H.A."/>
            <person name="Rossi A."/>
            <person name="Sena J.A.D."/>
            <person name="Silva C."/>
            <person name="de Souza R.F."/>
            <person name="Spinola L.A.F."/>
            <person name="Takita M.A."/>
            <person name="Tamura R.E."/>
            <person name="Teixeira E.C."/>
            <person name="Tezza R.I.D."/>
            <person name="Trindade dos Santos M."/>
            <person name="Truffi D."/>
            <person name="Tsai S.M."/>
            <person name="White F.F."/>
            <person name="Setubal J.C."/>
            <person name="Kitajima J.P."/>
        </authorList>
    </citation>
    <scope>NUCLEOTIDE SEQUENCE [LARGE SCALE GENOMIC DNA]</scope>
    <source>
        <strain>ATCC 33913 / DSM 3586 / NCPPB 528 / LMG 568 / P 25</strain>
    </source>
</reference>